<evidence type="ECO:0000255" key="1"/>
<evidence type="ECO:0000255" key="2">
    <source>
        <dbReference type="PROSITE-ProRule" id="PRU00167"/>
    </source>
</evidence>
<evidence type="ECO:0000256" key="3">
    <source>
        <dbReference type="SAM" id="MobiDB-lite"/>
    </source>
</evidence>
<evidence type="ECO:0000269" key="4">
    <source>
    </source>
</evidence>
<evidence type="ECO:0000269" key="5">
    <source>
    </source>
</evidence>
<evidence type="ECO:0000269" key="6">
    <source>
    </source>
</evidence>
<evidence type="ECO:0000269" key="7">
    <source>
    </source>
</evidence>
<evidence type="ECO:0000269" key="8">
    <source>
    </source>
</evidence>
<gene>
    <name type="primary">gapA</name>
    <name type="ORF">DDB_G0269140</name>
</gene>
<name>GAPA_DICDI</name>
<accession>O00899</accession>
<accession>Q55DP3</accession>
<reference key="1">
    <citation type="journal article" date="1997" name="J. Cell Biol.">
        <title>Dictyostelium IQGAP-related protein specifically involved in the completion of cytokinesis.</title>
        <authorList>
            <person name="Adachi H."/>
            <person name="Takahashi Y."/>
            <person name="Hasebe T."/>
            <person name="Shirouzu M."/>
            <person name="Yokoyama S."/>
            <person name="Sutoh K."/>
        </authorList>
    </citation>
    <scope>NUCLEOTIDE SEQUENCE [GENOMIC DNA]</scope>
    <scope>FUNCTION</scope>
    <scope>DISRUPTION PHENOTYPE</scope>
    <scope>DEVELOPMENTAL STAGE</scope>
    <source>
        <strain>AX2</strain>
    </source>
</reference>
<reference key="2">
    <citation type="journal article" date="2005" name="Nature">
        <title>The genome of the social amoeba Dictyostelium discoideum.</title>
        <authorList>
            <person name="Eichinger L."/>
            <person name="Pachebat J.A."/>
            <person name="Gloeckner G."/>
            <person name="Rajandream M.A."/>
            <person name="Sucgang R."/>
            <person name="Berriman M."/>
            <person name="Song J."/>
            <person name="Olsen R."/>
            <person name="Szafranski K."/>
            <person name="Xu Q."/>
            <person name="Tunggal B."/>
            <person name="Kummerfeld S."/>
            <person name="Madera M."/>
            <person name="Konfortov B.A."/>
            <person name="Rivero F."/>
            <person name="Bankier A.T."/>
            <person name="Lehmann R."/>
            <person name="Hamlin N."/>
            <person name="Davies R."/>
            <person name="Gaudet P."/>
            <person name="Fey P."/>
            <person name="Pilcher K."/>
            <person name="Chen G."/>
            <person name="Saunders D."/>
            <person name="Sodergren E.J."/>
            <person name="Davis P."/>
            <person name="Kerhornou A."/>
            <person name="Nie X."/>
            <person name="Hall N."/>
            <person name="Anjard C."/>
            <person name="Hemphill L."/>
            <person name="Bason N."/>
            <person name="Farbrother P."/>
            <person name="Desany B."/>
            <person name="Just E."/>
            <person name="Morio T."/>
            <person name="Rost R."/>
            <person name="Churcher C.M."/>
            <person name="Cooper J."/>
            <person name="Haydock S."/>
            <person name="van Driessche N."/>
            <person name="Cronin A."/>
            <person name="Goodhead I."/>
            <person name="Muzny D.M."/>
            <person name="Mourier T."/>
            <person name="Pain A."/>
            <person name="Lu M."/>
            <person name="Harper D."/>
            <person name="Lindsay R."/>
            <person name="Hauser H."/>
            <person name="James K.D."/>
            <person name="Quiles M."/>
            <person name="Madan Babu M."/>
            <person name="Saito T."/>
            <person name="Buchrieser C."/>
            <person name="Wardroper A."/>
            <person name="Felder M."/>
            <person name="Thangavelu M."/>
            <person name="Johnson D."/>
            <person name="Knights A."/>
            <person name="Loulseged H."/>
            <person name="Mungall K.L."/>
            <person name="Oliver K."/>
            <person name="Price C."/>
            <person name="Quail M.A."/>
            <person name="Urushihara H."/>
            <person name="Hernandez J."/>
            <person name="Rabbinowitsch E."/>
            <person name="Steffen D."/>
            <person name="Sanders M."/>
            <person name="Ma J."/>
            <person name="Kohara Y."/>
            <person name="Sharp S."/>
            <person name="Simmonds M.N."/>
            <person name="Spiegler S."/>
            <person name="Tivey A."/>
            <person name="Sugano S."/>
            <person name="White B."/>
            <person name="Walker D."/>
            <person name="Woodward J.R."/>
            <person name="Winckler T."/>
            <person name="Tanaka Y."/>
            <person name="Shaulsky G."/>
            <person name="Schleicher M."/>
            <person name="Weinstock G.M."/>
            <person name="Rosenthal A."/>
            <person name="Cox E.C."/>
            <person name="Chisholm R.L."/>
            <person name="Gibbs R.A."/>
            <person name="Loomis W.F."/>
            <person name="Platzer M."/>
            <person name="Kay R.R."/>
            <person name="Williams J.G."/>
            <person name="Dear P.H."/>
            <person name="Noegel A.A."/>
            <person name="Barrell B.G."/>
            <person name="Kuspa A."/>
        </authorList>
    </citation>
    <scope>NUCLEOTIDE SEQUENCE [LARGE SCALE GENOMIC DNA]</scope>
    <source>
        <strain>AX4</strain>
    </source>
</reference>
<reference key="3">
    <citation type="journal article" date="2001" name="Biosci. Biotechnol. Biochem.">
        <title>Mutational analyses of Dictyostelium IQGAP-related protein GAPA: possible interaction with small GTPases in cytokinesis.</title>
        <authorList>
            <person name="Sakurai M."/>
            <person name="Adachi H."/>
            <person name="Sutoh K."/>
        </authorList>
    </citation>
    <scope>FUNCTION</scope>
    <scope>MUTAGENESIS OF ARG-442 AND LYS-474</scope>
</reference>
<reference key="4">
    <citation type="journal article" date="2001" name="EMBO J.">
        <title>Recruitment of cortexillin into the cleavage furrow is controlled by Rac1 and IQGAP-related proteins.</title>
        <authorList>
            <person name="Faix J."/>
            <person name="Weber I."/>
            <person name="Mintert U."/>
            <person name="Koehler J."/>
            <person name="Lottspeich F."/>
            <person name="Marriott G."/>
        </authorList>
    </citation>
    <scope>FUNCTION</scope>
    <scope>SUBUNIT</scope>
    <scope>DISRUPTION PHENOTYPE</scope>
</reference>
<reference key="5">
    <citation type="journal article" date="2003" name="J. Cell Sci.">
        <title>A STAT-regulated, stress-induced signalling pathway in Dictyostelium.</title>
        <authorList>
            <person name="Araki T."/>
            <person name="Tsujioka M."/>
            <person name="Abe T."/>
            <person name="Fukuzawa M."/>
            <person name="Meima M."/>
            <person name="Schaap P."/>
            <person name="Morio T."/>
            <person name="Urushihara H."/>
            <person name="Katoh M."/>
            <person name="Maeda M."/>
            <person name="Tanaka Y."/>
            <person name="Takeuchi I."/>
            <person name="Williams J.G."/>
        </authorList>
    </citation>
    <scope>INDUCTION</scope>
</reference>
<reference key="6">
    <citation type="journal article" date="2005" name="Bioinformatics">
        <title>Microarray phenotyping in Dictyostelium reveals a regulon of chemotaxis genes.</title>
        <authorList>
            <person name="Booth E.O."/>
            <person name="Van Driessche N."/>
            <person name="Zhuchenko O."/>
            <person name="Kuspa A."/>
            <person name="Shaulsky G."/>
        </authorList>
    </citation>
    <scope>IDENTIFICATION</scope>
</reference>
<reference key="7">
    <citation type="journal article" date="2007" name="BMC Genomics">
        <title>STATc is a key regulator of the transcriptional response to hyperosmotic shock.</title>
        <authorList>
            <person name="Na J."/>
            <person name="Tunggal B."/>
            <person name="Eichinger L."/>
        </authorList>
    </citation>
    <scope>INDUCTION</scope>
</reference>
<keyword id="KW-0131">Cell cycle</keyword>
<keyword id="KW-0132">Cell division</keyword>
<keyword id="KW-0175">Coiled coil</keyword>
<keyword id="KW-1185">Reference proteome</keyword>
<organism>
    <name type="scientific">Dictyostelium discoideum</name>
    <name type="common">Social amoeba</name>
    <dbReference type="NCBI Taxonomy" id="44689"/>
    <lineage>
        <taxon>Eukaryota</taxon>
        <taxon>Amoebozoa</taxon>
        <taxon>Evosea</taxon>
        <taxon>Eumycetozoa</taxon>
        <taxon>Dictyostelia</taxon>
        <taxon>Dictyosteliales</taxon>
        <taxon>Dictyosteliaceae</taxon>
        <taxon>Dictyostelium</taxon>
    </lineage>
</organism>
<sequence length="860" mass="98825">MEGLEIEDEDVILLDEDDDSSSSSTVNNSSSNIKNNGNTNNNIGNDDSNKVTLMTSLREKGWGSGMLVDKEKNQYGTIKSYKDDKSSPWFEERQVIATLYKARVLLHEMIYTKMNQERLLSGNLCVGEIQSLLNTQKEDVETDWIAEIQELKRNMVAEIRRNHLLERDVNKLDKRIALLIKHRSNIKDLLLEQNKGKKDKKKKGDDKAEYITLDQKQLESYQNLFYLLQTEPHYLAKLVTLIQADQMEDFLDTVFLTLFGDDFSPREEFLILSLFRLAIGQEMSRIKSAGDLLAVESVVPKMIITYTRRKQGHEFLKQIIAPILENNVVNAPDLNLELNAVQVYQNMISEQEIQTGAKSTLNRGLAEDQIIQLKEVQSILEPRVEKCIQICERFFTGIIQSLNRLPYGIRWICKQIQSIAQKNFDSKPDEIAKVIGYFVYYRFINLAIVTPDAFEILDKELSITSRKNLVNIAKVLQNLFTLKTFQNQGSERWMQPLNKWILSKTSIVRQYLEDLIQVTDPSEYLRVDKYNELTLKLNPVVVISLGEISQTHRLLIANLAALKMKEKEDPLELILKALPAPLEVVDENDREIQLTLINRFKENIEKEISISASLLAETKELVISVLRSIPIQQKQQQQQHDDEKRDDLISILQNAIKHGKETNNPQLSSNAEKIINNLKKMEAEGSIQSENNQYEGFIKVIALEVINRQEIREQQRKERMRLTIALRDLRKHQSYLNDQIQHYTSYLKDVLLHYGPKDKKKSTKPMKISFKELTKKGVIVESDIPKLSHGSTSFYISSDAPGIFDIEARIGVASVGTLSLSLDDLLDKSSAGIPYLKLENIVLDVNMTLHLLNRHFLKNI</sequence>
<feature type="chain" id="PRO_0000386631" description="Ras GTPase-activating-like protein gapA">
    <location>
        <begin position="1"/>
        <end position="860"/>
    </location>
</feature>
<feature type="domain" description="Ras-GAP" evidence="2">
    <location>
        <begin position="269"/>
        <end position="515"/>
    </location>
</feature>
<feature type="region of interest" description="Disordered" evidence="3">
    <location>
        <begin position="1"/>
        <end position="48"/>
    </location>
</feature>
<feature type="coiled-coil region" evidence="1">
    <location>
        <begin position="146"/>
        <end position="185"/>
    </location>
</feature>
<feature type="coiled-coil region" evidence="1">
    <location>
        <begin position="663"/>
        <end position="732"/>
    </location>
</feature>
<feature type="compositionally biased region" description="Acidic residues" evidence="3">
    <location>
        <begin position="1"/>
        <end position="20"/>
    </location>
</feature>
<feature type="compositionally biased region" description="Low complexity" evidence="3">
    <location>
        <begin position="21"/>
        <end position="46"/>
    </location>
</feature>
<feature type="mutagenesis site" description="Unable to complement a gapA null mutant." evidence="5">
    <original>R</original>
    <variation>E</variation>
    <location>
        <position position="442"/>
    </location>
</feature>
<feature type="mutagenesis site" description="Able to complement a gapA null mutant." evidence="5">
    <original>R</original>
    <variation>K</variation>
    <location>
        <position position="442"/>
    </location>
</feature>
<feature type="mutagenesis site" description="Unable to complement a gapA null mutant." evidence="5">
    <original>K</original>
    <variation>E</variation>
    <location>
        <position position="474"/>
    </location>
</feature>
<feature type="mutagenesis site" description="Able to complement a gapA null mutant." evidence="5">
    <original>K</original>
    <variation>R</variation>
    <location>
        <position position="474"/>
    </location>
</feature>
<comment type="function">
    <text evidence="4 5 8">Part of signaling pathway that is required for completion of cytokinesis. gapA and rgaA control cortexillin localization to the cleavage furrow and hence may be involved in cleavage of the midbody in the final stage of cytokinesis by regulating the actin cytoskeleton. Forms a complex by linking activated rac1A to ctxA in the absence of rgaA. Assembly of this complex is necessary for the recruitment of cortexillin to the midzone of the dividing cell.</text>
</comment>
<comment type="subunit">
    <text evidence="4">Heterotetramer. Quaternary complex with activated rac1A, ctxA and ctxB in the absence of rgaA.</text>
</comment>
<comment type="developmental stage">
    <text evidence="8">Not required for development.</text>
</comment>
<comment type="induction">
    <text evidence="6 7">Rapidly up-regulated by hyperosmotic stress, which is dependent on dstC. Strongly inducible by 8-bromo-cGMP and to a lesser extent by 8-bromo-cAMP. Not induced by DIF (differentiation-inducing factor- a chlorinated hexaphenone).</text>
</comment>
<comment type="disruption phenotype">
    <text evidence="4 8">Cells initiate cleavage furrow formation but rarely complete cytokinesis. They grow as giant and multinucleate cells both on a substratum and in suspension culture with increased cell mass but development remains unaffected. Mutants lacking both rgaA and gapA are extremely large, flat and multinucleate, and exhibit cytokinesis defects similar to that seen with simultaneous loss of ctxA and ctxB. Starved null cells form normal fruiting bodies with viable spores at the same time as wild-type cells and the increase in size of the plaque on the bacterial lawn and the terminal phenotype also unaffected. Earlier stages of cytokinesis characterized by accumulation of myosin II at the furrow not affected.</text>
</comment>
<protein>
    <recommendedName>
        <fullName>Ras GTPase-activating-like protein gapA</fullName>
    </recommendedName>
    <alternativeName>
        <fullName>IQGAP-related protein gapA</fullName>
    </alternativeName>
</protein>
<proteinExistence type="evidence at protein level"/>
<dbReference type="EMBL" id="D88027">
    <property type="protein sequence ID" value="BAA20434.1"/>
    <property type="molecule type" value="Genomic_DNA"/>
</dbReference>
<dbReference type="EMBL" id="AAFI02000005">
    <property type="protein sequence ID" value="EAL71920.1"/>
    <property type="molecule type" value="Genomic_DNA"/>
</dbReference>
<dbReference type="RefSeq" id="XP_646088.1">
    <property type="nucleotide sequence ID" value="XM_640996.1"/>
</dbReference>
<dbReference type="SMR" id="O00899"/>
<dbReference type="FunCoup" id="O00899">
    <property type="interactions" value="3"/>
</dbReference>
<dbReference type="IntAct" id="O00899">
    <property type="interactions" value="1"/>
</dbReference>
<dbReference type="STRING" id="44689.O00899"/>
<dbReference type="PaxDb" id="44689-DDB0191293"/>
<dbReference type="EnsemblProtists" id="EAL71920">
    <property type="protein sequence ID" value="EAL71920"/>
    <property type="gene ID" value="DDB_G0269140"/>
</dbReference>
<dbReference type="GeneID" id="8617038"/>
<dbReference type="KEGG" id="ddi:DDB_G0269140"/>
<dbReference type="dictyBase" id="DDB_G0269140">
    <property type="gene designation" value="gapA"/>
</dbReference>
<dbReference type="VEuPathDB" id="AmoebaDB:DDB_G0269140"/>
<dbReference type="eggNOG" id="KOG2128">
    <property type="taxonomic scope" value="Eukaryota"/>
</dbReference>
<dbReference type="HOGENOM" id="CLU_009455_0_0_1"/>
<dbReference type="InParanoid" id="O00899"/>
<dbReference type="OMA" id="VYQNMIS"/>
<dbReference type="PhylomeDB" id="O00899"/>
<dbReference type="Reactome" id="R-DDI-5626467">
    <property type="pathway name" value="RHO GTPases activate IQGAPs"/>
</dbReference>
<dbReference type="Reactome" id="R-DDI-6798695">
    <property type="pathway name" value="Neutrophil degranulation"/>
</dbReference>
<dbReference type="Reactome" id="R-DDI-9013149">
    <property type="pathway name" value="RAC1 GTPase cycle"/>
</dbReference>
<dbReference type="Reactome" id="R-DDI-9013404">
    <property type="pathway name" value="RAC2 GTPase cycle"/>
</dbReference>
<dbReference type="Reactome" id="R-DDI-9013406">
    <property type="pathway name" value="RHOQ GTPase cycle"/>
</dbReference>
<dbReference type="Reactome" id="R-DDI-9013420">
    <property type="pathway name" value="RHOU GTPase cycle"/>
</dbReference>
<dbReference type="Reactome" id="R-DDI-9013424">
    <property type="pathway name" value="RHOV GTPase cycle"/>
</dbReference>
<dbReference type="PRO" id="PR:O00899"/>
<dbReference type="Proteomes" id="UP000002195">
    <property type="component" value="Chromosome 1"/>
</dbReference>
<dbReference type="GO" id="GO:0005938">
    <property type="term" value="C:cell cortex"/>
    <property type="evidence" value="ECO:0000314"/>
    <property type="project" value="dictyBase"/>
</dbReference>
<dbReference type="GO" id="GO:0031254">
    <property type="term" value="C:cell trailing edge"/>
    <property type="evidence" value="ECO:0000314"/>
    <property type="project" value="dictyBase"/>
</dbReference>
<dbReference type="GO" id="GO:0032154">
    <property type="term" value="C:cleavage furrow"/>
    <property type="evidence" value="ECO:0000314"/>
    <property type="project" value="dictyBase"/>
</dbReference>
<dbReference type="GO" id="GO:0005829">
    <property type="term" value="C:cytosol"/>
    <property type="evidence" value="ECO:0000314"/>
    <property type="project" value="dictyBase"/>
</dbReference>
<dbReference type="GO" id="GO:0030175">
    <property type="term" value="C:filopodium"/>
    <property type="evidence" value="ECO:0000314"/>
    <property type="project" value="dictyBase"/>
</dbReference>
<dbReference type="GO" id="GO:0030027">
    <property type="term" value="C:lamellipodium"/>
    <property type="evidence" value="ECO:0000314"/>
    <property type="project" value="dictyBase"/>
</dbReference>
<dbReference type="GO" id="GO:0051015">
    <property type="term" value="F:actin filament binding"/>
    <property type="evidence" value="ECO:0000318"/>
    <property type="project" value="GO_Central"/>
</dbReference>
<dbReference type="GO" id="GO:0005516">
    <property type="term" value="F:calmodulin binding"/>
    <property type="evidence" value="ECO:0000318"/>
    <property type="project" value="GO_Central"/>
</dbReference>
<dbReference type="GO" id="GO:0005096">
    <property type="term" value="F:GTPase activator activity"/>
    <property type="evidence" value="ECO:0000318"/>
    <property type="project" value="GO_Central"/>
</dbReference>
<dbReference type="GO" id="GO:0042802">
    <property type="term" value="F:identical protein binding"/>
    <property type="evidence" value="ECO:0000353"/>
    <property type="project" value="dictyBase"/>
</dbReference>
<dbReference type="GO" id="GO:0031267">
    <property type="term" value="F:small GTPase binding"/>
    <property type="evidence" value="ECO:0000353"/>
    <property type="project" value="dictyBase"/>
</dbReference>
<dbReference type="GO" id="GO:0043327">
    <property type="term" value="P:chemotaxis to cAMP"/>
    <property type="evidence" value="ECO:0000316"/>
    <property type="project" value="dictyBase"/>
</dbReference>
<dbReference type="GO" id="GO:0050982">
    <property type="term" value="P:detection of mechanical stimulus"/>
    <property type="evidence" value="ECO:0000315"/>
    <property type="project" value="dictyBase"/>
</dbReference>
<dbReference type="GO" id="GO:0006972">
    <property type="term" value="P:hyperosmotic response"/>
    <property type="evidence" value="ECO:0000270"/>
    <property type="project" value="dictyBase"/>
</dbReference>
<dbReference type="GO" id="GO:1903479">
    <property type="term" value="P:mitotic actomyosin contractile ring assembly actin filament organization"/>
    <property type="evidence" value="ECO:0000318"/>
    <property type="project" value="GO_Central"/>
</dbReference>
<dbReference type="GO" id="GO:0000281">
    <property type="term" value="P:mitotic cytokinesis"/>
    <property type="evidence" value="ECO:0000315"/>
    <property type="project" value="dictyBase"/>
</dbReference>
<dbReference type="GO" id="GO:0030837">
    <property type="term" value="P:negative regulation of actin filament polymerization"/>
    <property type="evidence" value="ECO:0000315"/>
    <property type="project" value="dictyBase"/>
</dbReference>
<dbReference type="GO" id="GO:1905345">
    <property type="term" value="P:protein localization to cleavage furrow"/>
    <property type="evidence" value="ECO:0000315"/>
    <property type="project" value="dictyBase"/>
</dbReference>
<dbReference type="GO" id="GO:0032956">
    <property type="term" value="P:regulation of actin cytoskeleton organization"/>
    <property type="evidence" value="ECO:0000315"/>
    <property type="project" value="dictyBase"/>
</dbReference>
<dbReference type="GO" id="GO:0043520">
    <property type="term" value="P:regulation of myosin II filament assembly"/>
    <property type="evidence" value="ECO:0000315"/>
    <property type="project" value="dictyBase"/>
</dbReference>
<dbReference type="GO" id="GO:0006979">
    <property type="term" value="P:response to oxidative stress"/>
    <property type="evidence" value="ECO:0000270"/>
    <property type="project" value="dictyBase"/>
</dbReference>
<dbReference type="GO" id="GO:0019953">
    <property type="term" value="P:sexual reproduction"/>
    <property type="evidence" value="ECO:0000270"/>
    <property type="project" value="dictyBase"/>
</dbReference>
<dbReference type="GO" id="GO:0051225">
    <property type="term" value="P:spindle assembly"/>
    <property type="evidence" value="ECO:0000315"/>
    <property type="project" value="dictyBase"/>
</dbReference>
<dbReference type="FunFam" id="1.10.506.10:FF:000004">
    <property type="entry name" value="IQ motif containing GTPase activating protein 1"/>
    <property type="match status" value="1"/>
</dbReference>
<dbReference type="Gene3D" id="1.10.506.10">
    <property type="entry name" value="GTPase Activation - p120gap, domain 1"/>
    <property type="match status" value="1"/>
</dbReference>
<dbReference type="InterPro" id="IPR000593">
    <property type="entry name" value="RasGAP_C"/>
</dbReference>
<dbReference type="InterPro" id="IPR001936">
    <property type="entry name" value="RasGAP_dom"/>
</dbReference>
<dbReference type="InterPro" id="IPR008936">
    <property type="entry name" value="Rho_GTPase_activation_prot"/>
</dbReference>
<dbReference type="PANTHER" id="PTHR14149">
    <property type="entry name" value="RAS GTPASE-ACTIVATING PROTEIN WITH IQ MOTIF"/>
    <property type="match status" value="1"/>
</dbReference>
<dbReference type="PANTHER" id="PTHR14149:SF16">
    <property type="entry name" value="RAS GTPASE-ACTIVATING-LIKE PROTEIN GAPA"/>
    <property type="match status" value="1"/>
</dbReference>
<dbReference type="Pfam" id="PF00616">
    <property type="entry name" value="RasGAP"/>
    <property type="match status" value="1"/>
</dbReference>
<dbReference type="Pfam" id="PF03836">
    <property type="entry name" value="RasGAP_C"/>
    <property type="match status" value="1"/>
</dbReference>
<dbReference type="SMART" id="SM00323">
    <property type="entry name" value="RasGAP"/>
    <property type="match status" value="1"/>
</dbReference>
<dbReference type="SUPFAM" id="SSF48350">
    <property type="entry name" value="GTPase activation domain, GAP"/>
    <property type="match status" value="1"/>
</dbReference>
<dbReference type="SUPFAM" id="SSF143885">
    <property type="entry name" value="RGC domain-like"/>
    <property type="match status" value="1"/>
</dbReference>
<dbReference type="PROSITE" id="PS50018">
    <property type="entry name" value="RAS_GTPASE_ACTIV_2"/>
    <property type="match status" value="1"/>
</dbReference>